<keyword id="KW-0025">Alternative splicing</keyword>
<keyword id="KW-0175">Coiled coil</keyword>
<keyword id="KW-0479">Metal-binding</keyword>
<keyword id="KW-0524">Neurogenesis</keyword>
<keyword id="KW-0539">Nucleus</keyword>
<keyword id="KW-1185">Reference proteome</keyword>
<keyword id="KW-0677">Repeat</keyword>
<keyword id="KW-0804">Transcription</keyword>
<keyword id="KW-0805">Transcription regulation</keyword>
<keyword id="KW-0862">Zinc</keyword>
<keyword id="KW-0863">Zinc-finger</keyword>
<sequence length="528" mass="58861">MSRKRNHCYMETGASSESQGAFVDSAGPFSRDEEDFSELEPDEQLVCSVTEITEHLGRNITVVLESALSEIRKLVGVRIRVLKMELREKSDEIELLKAKLESAEKDGRVSNFSSLDFRKSEHQKYGAEPKKAKTGTPVVKKENINAICDYLMKDKNQRGAAEVESDHSNQAFGSERDVRTEAQPHGSLSLWPDSGPADTDAETDIFSMLPSASKRMYDYEWMTGVELNSAEFKGDSETKCEDVPPMDEEDENEDSEEGRGSLRSVSDHFPLDTQGSPGEDRSSPAEDSMDRMEPGQQFTSHTFICPFCGTLCPDSSFLEEHIKLMHHGESLLQSTSAGSSSQAEGDSGEAGPASRGAREKKVEGGYECGDCGRHFNYLGNLRQHQRIHTGEKPFVCPECGERFRHTARLKSHRLSHSGAQSPFPCPQCGKGFPVLSGLKRHQRVHTGESPYACPQCGRRFKELGNLYTHMRIHSGATPYTCYQCGRSFRHLGTYKSHRCMPATQMPSEHSPPWAQEDKVQTGRLQGYV</sequence>
<accession>A0A1D5NS60</accession>
<accession>A0A1D5NSY2</accession>
<name>ZN16L_DANRE</name>
<evidence type="ECO:0000255" key="1"/>
<evidence type="ECO:0000255" key="2">
    <source>
        <dbReference type="PROSITE-ProRule" id="PRU00042"/>
    </source>
</evidence>
<evidence type="ECO:0000256" key="3">
    <source>
        <dbReference type="SAM" id="MobiDB-lite"/>
    </source>
</evidence>
<evidence type="ECO:0000269" key="4">
    <source>
    </source>
</evidence>
<evidence type="ECO:0000303" key="5">
    <source>
    </source>
</evidence>
<evidence type="ECO:0000305" key="6"/>
<evidence type="ECO:0000312" key="7">
    <source>
        <dbReference type="Proteomes" id="UP000000437"/>
    </source>
</evidence>
<evidence type="ECO:0000312" key="8">
    <source>
        <dbReference type="ZFIN" id="ZDB-GENE-160728-135"/>
    </source>
</evidence>
<comment type="function">
    <text evidence="4 6">Probable transcription factor (Probable). Important for development and migration of oligodendrocyte precursor cells, and normal myelination of axons in the central nervous system (CNS) (PubMed:26459222). Functions autonomously in oligodendrocytes to promote CNS myelination (PubMed:26459222). Seems to act in parallel with notch3 during oligodendrocyte development (PubMed:26459222).</text>
</comment>
<comment type="subcellular location">
    <subcellularLocation>
        <location evidence="6">Nucleus</location>
    </subcellularLocation>
</comment>
<comment type="alternative products">
    <event type="alternative splicing"/>
    <isoform>
        <id>A0A1D5NS60-1</id>
        <name>1</name>
        <sequence type="displayed"/>
    </isoform>
    <isoform>
        <id>A0A1D5NS60-2</id>
        <name>2</name>
        <sequence type="described" ref="VSP_059729"/>
    </isoform>
</comment>
<comment type="disruption phenotype">
    <text evidence="4">Gross morphology is normal. Expression of myelin basic protein (mbp) in the central nervous system at 5 dpf is strongly reduced. Expression of mpb in the peripheral nervous system is normal.</text>
</comment>
<comment type="similarity">
    <text evidence="6">Belongs to the krueppel C2H2-type zinc-finger protein family.</text>
</comment>
<dbReference type="EMBL" id="BX324198">
    <property type="status" value="NOT_ANNOTATED_CDS"/>
    <property type="molecule type" value="Genomic_DNA"/>
</dbReference>
<dbReference type="RefSeq" id="NP_001410732.1">
    <molecule id="A0A1D5NS60-2"/>
    <property type="nucleotide sequence ID" value="NM_001423803.1"/>
</dbReference>
<dbReference type="SMR" id="A0A1D5NS60"/>
<dbReference type="FunCoup" id="A0A1D5NS60">
    <property type="interactions" value="81"/>
</dbReference>
<dbReference type="STRING" id="7955.ENSDARP00000142669"/>
<dbReference type="PaxDb" id="7955-ENSDARP00000108517"/>
<dbReference type="Ensembl" id="ENSDART00000173638">
    <molecule id="A0A1D5NS60-1"/>
    <property type="protein sequence ID" value="ENSDARP00000142669"/>
    <property type="gene ID" value="ENSDARG00000105532"/>
</dbReference>
<dbReference type="AGR" id="ZFIN:ZDB-GENE-160728-135"/>
<dbReference type="ZFIN" id="ZDB-GENE-160728-135">
    <property type="gene designation" value="znf16l"/>
</dbReference>
<dbReference type="eggNOG" id="KOG1721">
    <property type="taxonomic scope" value="Eukaryota"/>
</dbReference>
<dbReference type="InParanoid" id="A0A1D5NS60"/>
<dbReference type="OMA" id="RLYDYEW"/>
<dbReference type="OrthoDB" id="6077919at2759"/>
<dbReference type="PRO" id="PR:A0A1D5NS60"/>
<dbReference type="Proteomes" id="UP000000437">
    <property type="component" value="Chromosome 7"/>
</dbReference>
<dbReference type="Bgee" id="ENSDARG00000105532">
    <property type="expression patterns" value="Expressed in mature ovarian follicle and 19 other cell types or tissues"/>
</dbReference>
<dbReference type="GO" id="GO:0005634">
    <property type="term" value="C:nucleus"/>
    <property type="evidence" value="ECO:0000318"/>
    <property type="project" value="GO_Central"/>
</dbReference>
<dbReference type="GO" id="GO:0000981">
    <property type="term" value="F:DNA-binding transcription factor activity, RNA polymerase II-specific"/>
    <property type="evidence" value="ECO:0000318"/>
    <property type="project" value="GO_Central"/>
</dbReference>
<dbReference type="GO" id="GO:0000977">
    <property type="term" value="F:RNA polymerase II transcription regulatory region sequence-specific DNA binding"/>
    <property type="evidence" value="ECO:0000318"/>
    <property type="project" value="GO_Central"/>
</dbReference>
<dbReference type="GO" id="GO:0008270">
    <property type="term" value="F:zinc ion binding"/>
    <property type="evidence" value="ECO:0007669"/>
    <property type="project" value="UniProtKB-KW"/>
</dbReference>
<dbReference type="GO" id="GO:0022010">
    <property type="term" value="P:central nervous system myelination"/>
    <property type="evidence" value="ECO:0000315"/>
    <property type="project" value="UniProtKB"/>
</dbReference>
<dbReference type="GO" id="GO:0031643">
    <property type="term" value="P:positive regulation of myelination"/>
    <property type="evidence" value="ECO:0000315"/>
    <property type="project" value="UniProtKB"/>
</dbReference>
<dbReference type="GO" id="GO:0048714">
    <property type="term" value="P:positive regulation of oligodendrocyte differentiation"/>
    <property type="evidence" value="ECO:0000315"/>
    <property type="project" value="UniProtKB"/>
</dbReference>
<dbReference type="GO" id="GO:0006357">
    <property type="term" value="P:regulation of transcription by RNA polymerase II"/>
    <property type="evidence" value="ECO:0000318"/>
    <property type="project" value="GO_Central"/>
</dbReference>
<dbReference type="FunFam" id="3.30.160.60:FF:001227">
    <property type="entry name" value="Zinc finger and BTB domain containing 41"/>
    <property type="match status" value="1"/>
</dbReference>
<dbReference type="FunFam" id="3.30.160.60:FF:001344">
    <property type="entry name" value="Zinc finger protein 16 like"/>
    <property type="match status" value="2"/>
</dbReference>
<dbReference type="FunFam" id="3.30.160.60:FF:001498">
    <property type="entry name" value="Zinc finger protein 404"/>
    <property type="match status" value="1"/>
</dbReference>
<dbReference type="FunFam" id="3.30.160.60:FF:000761">
    <property type="entry name" value="Zinc finger protein 449"/>
    <property type="match status" value="1"/>
</dbReference>
<dbReference type="Gene3D" id="3.30.160.60">
    <property type="entry name" value="Classic Zinc Finger"/>
    <property type="match status" value="5"/>
</dbReference>
<dbReference type="InterPro" id="IPR050717">
    <property type="entry name" value="C2H2-ZF_Transcription_Reg"/>
</dbReference>
<dbReference type="InterPro" id="IPR036236">
    <property type="entry name" value="Znf_C2H2_sf"/>
</dbReference>
<dbReference type="InterPro" id="IPR013087">
    <property type="entry name" value="Znf_C2H2_type"/>
</dbReference>
<dbReference type="PANTHER" id="PTHR14196">
    <property type="entry name" value="ODD-SKIPPED - RELATED"/>
    <property type="match status" value="1"/>
</dbReference>
<dbReference type="PANTHER" id="PTHR14196:SF12">
    <property type="entry name" value="ZINC FINGER PROTEIN 208-LIKE"/>
    <property type="match status" value="1"/>
</dbReference>
<dbReference type="Pfam" id="PF00096">
    <property type="entry name" value="zf-C2H2"/>
    <property type="match status" value="4"/>
</dbReference>
<dbReference type="SMART" id="SM00355">
    <property type="entry name" value="ZnF_C2H2"/>
    <property type="match status" value="6"/>
</dbReference>
<dbReference type="SUPFAM" id="SSF57667">
    <property type="entry name" value="beta-beta-alpha zinc fingers"/>
    <property type="match status" value="3"/>
</dbReference>
<dbReference type="PROSITE" id="PS00028">
    <property type="entry name" value="ZINC_FINGER_C2H2_1"/>
    <property type="match status" value="5"/>
</dbReference>
<dbReference type="PROSITE" id="PS50157">
    <property type="entry name" value="ZINC_FINGER_C2H2_2"/>
    <property type="match status" value="6"/>
</dbReference>
<feature type="chain" id="PRO_0000445020" description="Zinc finger protein 16-like">
    <location>
        <begin position="1"/>
        <end position="528"/>
    </location>
</feature>
<feature type="zinc finger region" description="C2H2-type 1" evidence="2">
    <location>
        <begin position="303"/>
        <end position="326"/>
    </location>
</feature>
<feature type="zinc finger region" description="C2H2-type 2" evidence="2">
    <location>
        <begin position="366"/>
        <end position="388"/>
    </location>
</feature>
<feature type="zinc finger region" description="C2H2-type 3" evidence="2">
    <location>
        <begin position="394"/>
        <end position="416"/>
    </location>
</feature>
<feature type="zinc finger region" description="C2H2-type 4" evidence="2">
    <location>
        <begin position="423"/>
        <end position="445"/>
    </location>
</feature>
<feature type="zinc finger region" description="C2H2-type 5" evidence="2">
    <location>
        <begin position="451"/>
        <end position="473"/>
    </location>
</feature>
<feature type="zinc finger region" description="C2H2-type 6; degenerate" evidence="2">
    <location>
        <begin position="479"/>
        <end position="501"/>
    </location>
</feature>
<feature type="region of interest" description="Disordered" evidence="3">
    <location>
        <begin position="1"/>
        <end position="28"/>
    </location>
</feature>
<feature type="region of interest" description="Disordered" evidence="3">
    <location>
        <begin position="159"/>
        <end position="202"/>
    </location>
</feature>
<feature type="region of interest" description="Disordered" evidence="3">
    <location>
        <begin position="232"/>
        <end position="293"/>
    </location>
</feature>
<feature type="region of interest" description="Disordered" evidence="3">
    <location>
        <begin position="333"/>
        <end position="359"/>
    </location>
</feature>
<feature type="region of interest" description="Disordered" evidence="3">
    <location>
        <begin position="502"/>
        <end position="528"/>
    </location>
</feature>
<feature type="coiled-coil region" evidence="1">
    <location>
        <begin position="79"/>
        <end position="106"/>
    </location>
</feature>
<feature type="compositionally biased region" description="Basic and acidic residues" evidence="3">
    <location>
        <begin position="232"/>
        <end position="242"/>
    </location>
</feature>
<feature type="compositionally biased region" description="Acidic residues" evidence="3">
    <location>
        <begin position="244"/>
        <end position="256"/>
    </location>
</feature>
<feature type="compositionally biased region" description="Basic and acidic residues" evidence="3">
    <location>
        <begin position="257"/>
        <end position="270"/>
    </location>
</feature>
<feature type="compositionally biased region" description="Basic and acidic residues" evidence="3">
    <location>
        <begin position="278"/>
        <end position="293"/>
    </location>
</feature>
<feature type="compositionally biased region" description="Low complexity" evidence="3">
    <location>
        <begin position="333"/>
        <end position="345"/>
    </location>
</feature>
<feature type="splice variant" id="VSP_059729" description="In isoform 2.">
    <location>
        <begin position="523"/>
        <end position="528"/>
    </location>
</feature>
<feature type="mutagenesis site" description="In st78; gross morphology is normal. Expression of myelin basic protein (mbp) in the central nervous system (CNS) is strongly reduced, whereas mbp expression in the peripheral nervous system is unaffected. Expression of sox10 and olig2 in oligodendrocyte precursor cells (OPCs) is significantly reduced. Migration of OPCs is impaired with delayed onset and aberrant pathfinding behavior. Myelination in the CNS is reduced at 5 and 9 days post-fertilization. Double knockouts with notch3 have a more severe phenotype." evidence="4">
    <original>C</original>
    <variation>F</variation>
    <location>
        <position position="428"/>
    </location>
</feature>
<proteinExistence type="evidence at protein level"/>
<organism evidence="7">
    <name type="scientific">Danio rerio</name>
    <name type="common">Zebrafish</name>
    <name type="synonym">Brachydanio rerio</name>
    <dbReference type="NCBI Taxonomy" id="7955"/>
    <lineage>
        <taxon>Eukaryota</taxon>
        <taxon>Metazoa</taxon>
        <taxon>Chordata</taxon>
        <taxon>Craniata</taxon>
        <taxon>Vertebrata</taxon>
        <taxon>Euteleostomi</taxon>
        <taxon>Actinopterygii</taxon>
        <taxon>Neopterygii</taxon>
        <taxon>Teleostei</taxon>
        <taxon>Ostariophysi</taxon>
        <taxon>Cypriniformes</taxon>
        <taxon>Danionidae</taxon>
        <taxon>Danioninae</taxon>
        <taxon>Danio</taxon>
    </lineage>
</organism>
<protein>
    <recommendedName>
        <fullName evidence="5">Zinc finger protein 16-like</fullName>
    </recommendedName>
    <alternativeName>
        <fullName evidence="5">Zinc finger protein 697-like</fullName>
    </alternativeName>
</protein>
<reference evidence="7" key="1">
    <citation type="journal article" date="2013" name="Nature">
        <title>The zebrafish reference genome sequence and its relationship to the human genome.</title>
        <authorList>
            <person name="Howe K."/>
            <person name="Clark M.D."/>
            <person name="Torroja C.F."/>
            <person name="Torrance J."/>
            <person name="Berthelot C."/>
            <person name="Muffato M."/>
            <person name="Collins J.E."/>
            <person name="Humphray S."/>
            <person name="McLaren K."/>
            <person name="Matthews L."/>
            <person name="McLaren S."/>
            <person name="Sealy I."/>
            <person name="Caccamo M."/>
            <person name="Churcher C."/>
            <person name="Scott C."/>
            <person name="Barrett J.C."/>
            <person name="Koch R."/>
            <person name="Rauch G.J."/>
            <person name="White S."/>
            <person name="Chow W."/>
            <person name="Kilian B."/>
            <person name="Quintais L.T."/>
            <person name="Guerra-Assuncao J.A."/>
            <person name="Zhou Y."/>
            <person name="Gu Y."/>
            <person name="Yen J."/>
            <person name="Vogel J.H."/>
            <person name="Eyre T."/>
            <person name="Redmond S."/>
            <person name="Banerjee R."/>
            <person name="Chi J."/>
            <person name="Fu B."/>
            <person name="Langley E."/>
            <person name="Maguire S.F."/>
            <person name="Laird G.K."/>
            <person name="Lloyd D."/>
            <person name="Kenyon E."/>
            <person name="Donaldson S."/>
            <person name="Sehra H."/>
            <person name="Almeida-King J."/>
            <person name="Loveland J."/>
            <person name="Trevanion S."/>
            <person name="Jones M."/>
            <person name="Quail M."/>
            <person name="Willey D."/>
            <person name="Hunt A."/>
            <person name="Burton J."/>
            <person name="Sims S."/>
            <person name="McLay K."/>
            <person name="Plumb B."/>
            <person name="Davis J."/>
            <person name="Clee C."/>
            <person name="Oliver K."/>
            <person name="Clark R."/>
            <person name="Riddle C."/>
            <person name="Elliot D."/>
            <person name="Threadgold G."/>
            <person name="Harden G."/>
            <person name="Ware D."/>
            <person name="Begum S."/>
            <person name="Mortimore B."/>
            <person name="Kerry G."/>
            <person name="Heath P."/>
            <person name="Phillimore B."/>
            <person name="Tracey A."/>
            <person name="Corby N."/>
            <person name="Dunn M."/>
            <person name="Johnson C."/>
            <person name="Wood J."/>
            <person name="Clark S."/>
            <person name="Pelan S."/>
            <person name="Griffiths G."/>
            <person name="Smith M."/>
            <person name="Glithero R."/>
            <person name="Howden P."/>
            <person name="Barker N."/>
            <person name="Lloyd C."/>
            <person name="Stevens C."/>
            <person name="Harley J."/>
            <person name="Holt K."/>
            <person name="Panagiotidis G."/>
            <person name="Lovell J."/>
            <person name="Beasley H."/>
            <person name="Henderson C."/>
            <person name="Gordon D."/>
            <person name="Auger K."/>
            <person name="Wright D."/>
            <person name="Collins J."/>
            <person name="Raisen C."/>
            <person name="Dyer L."/>
            <person name="Leung K."/>
            <person name="Robertson L."/>
            <person name="Ambridge K."/>
            <person name="Leongamornlert D."/>
            <person name="McGuire S."/>
            <person name="Gilderthorp R."/>
            <person name="Griffiths C."/>
            <person name="Manthravadi D."/>
            <person name="Nichol S."/>
            <person name="Barker G."/>
            <person name="Whitehead S."/>
            <person name="Kay M."/>
            <person name="Brown J."/>
            <person name="Murnane C."/>
            <person name="Gray E."/>
            <person name="Humphries M."/>
            <person name="Sycamore N."/>
            <person name="Barker D."/>
            <person name="Saunders D."/>
            <person name="Wallis J."/>
            <person name="Babbage A."/>
            <person name="Hammond S."/>
            <person name="Mashreghi-Mohammadi M."/>
            <person name="Barr L."/>
            <person name="Martin S."/>
            <person name="Wray P."/>
            <person name="Ellington A."/>
            <person name="Matthews N."/>
            <person name="Ellwood M."/>
            <person name="Woodmansey R."/>
            <person name="Clark G."/>
            <person name="Cooper J."/>
            <person name="Tromans A."/>
            <person name="Grafham D."/>
            <person name="Skuce C."/>
            <person name="Pandian R."/>
            <person name="Andrews R."/>
            <person name="Harrison E."/>
            <person name="Kimberley A."/>
            <person name="Garnett J."/>
            <person name="Fosker N."/>
            <person name="Hall R."/>
            <person name="Garner P."/>
            <person name="Kelly D."/>
            <person name="Bird C."/>
            <person name="Palmer S."/>
            <person name="Gehring I."/>
            <person name="Berger A."/>
            <person name="Dooley C.M."/>
            <person name="Ersan-Urun Z."/>
            <person name="Eser C."/>
            <person name="Geiger H."/>
            <person name="Geisler M."/>
            <person name="Karotki L."/>
            <person name="Kirn A."/>
            <person name="Konantz J."/>
            <person name="Konantz M."/>
            <person name="Oberlander M."/>
            <person name="Rudolph-Geiger S."/>
            <person name="Teucke M."/>
            <person name="Lanz C."/>
            <person name="Raddatz G."/>
            <person name="Osoegawa K."/>
            <person name="Zhu B."/>
            <person name="Rapp A."/>
            <person name="Widaa S."/>
            <person name="Langford C."/>
            <person name="Yang F."/>
            <person name="Schuster S.C."/>
            <person name="Carter N.P."/>
            <person name="Harrow J."/>
            <person name="Ning Z."/>
            <person name="Herrero J."/>
            <person name="Searle S.M."/>
            <person name="Enright A."/>
            <person name="Geisler R."/>
            <person name="Plasterk R.H."/>
            <person name="Lee C."/>
            <person name="Westerfield M."/>
            <person name="de Jong P.J."/>
            <person name="Zon L.I."/>
            <person name="Postlethwait J.H."/>
            <person name="Nusslein-Volhard C."/>
            <person name="Hubbard T.J."/>
            <person name="Roest Crollius H."/>
            <person name="Rogers J."/>
            <person name="Stemple D.L."/>
        </authorList>
    </citation>
    <scope>NUCLEOTIDE SEQUENCE [LARGE SCALE GENOMIC DNA]</scope>
    <source>
        <strain>Tuebingen</strain>
    </source>
</reference>
<reference evidence="6" key="2">
    <citation type="journal article" date="2015" name="Development">
        <title>A zinc finger protein that regulates oligodendrocyte specification, migration and myelination in zebrafish.</title>
        <authorList>
            <person name="Sidik H."/>
            <person name="Talbot W.S."/>
        </authorList>
    </citation>
    <scope>FUNCTION</scope>
    <scope>DISRUPTION PHENOTYPE</scope>
    <scope>MUTAGENESIS OF CYS-428</scope>
</reference>
<gene>
    <name evidence="5" type="primary">znf16l</name>
    <name evidence="5" type="synonym">znf697l</name>
    <name evidence="8" type="ORF">si:ch211-108m2.2</name>
</gene>